<evidence type="ECO:0000256" key="1">
    <source>
        <dbReference type="SAM" id="MobiDB-lite"/>
    </source>
</evidence>
<evidence type="ECO:0000269" key="2">
    <source>
    </source>
</evidence>
<evidence type="ECO:0000269" key="3">
    <source>
    </source>
</evidence>
<evidence type="ECO:0000269" key="4">
    <source>
    </source>
</evidence>
<evidence type="ECO:0000269" key="5">
    <source>
    </source>
</evidence>
<evidence type="ECO:0000269" key="6">
    <source>
    </source>
</evidence>
<evidence type="ECO:0000269" key="7">
    <source>
    </source>
</evidence>
<evidence type="ECO:0000269" key="8">
    <source>
    </source>
</evidence>
<evidence type="ECO:0000303" key="9">
    <source>
    </source>
</evidence>
<evidence type="ECO:0000303" key="10">
    <source>
    </source>
</evidence>
<evidence type="ECO:0000303" key="11">
    <source ref="4"/>
</evidence>
<evidence type="ECO:0000305" key="12"/>
<evidence type="ECO:0007829" key="13">
    <source>
        <dbReference type="PDB" id="4YD8"/>
    </source>
</evidence>
<feature type="chain" id="PRO_0000235269" description="Protein PTHB1">
    <location>
        <begin position="1"/>
        <end position="887"/>
    </location>
</feature>
<feature type="region of interest" description="Seven-bladed beta-propeller" evidence="8">
    <location>
        <begin position="1"/>
        <end position="407"/>
    </location>
</feature>
<feature type="region of interest" description="Interaction with LZTL1" evidence="7">
    <location>
        <begin position="685"/>
        <end position="765"/>
    </location>
</feature>
<feature type="region of interest" description="Disordered" evidence="1">
    <location>
        <begin position="850"/>
        <end position="887"/>
    </location>
</feature>
<feature type="site" description="Critical for protein stability" evidence="8">
    <location>
        <position position="141"/>
    </location>
</feature>
<feature type="splice variant" id="VSP_018421" description="In isoform 5." evidence="10">
    <location>
        <begin position="1"/>
        <end position="45"/>
    </location>
</feature>
<feature type="splice variant" id="VSP_018422" description="In isoform 5." evidence="10">
    <original>HDLKGVIVTLSDDGHLQ</original>
    <variation>QFSLWKHLLPRSSTLEK</variation>
    <location>
        <begin position="339"/>
        <end position="355"/>
    </location>
</feature>
<feature type="splice variant" id="VSP_018423" description="In isoform 5." evidence="10">
    <location>
        <begin position="356"/>
        <end position="887"/>
    </location>
</feature>
<feature type="splice variant" id="VSP_018426" description="In isoform 2." evidence="9">
    <original>TPDLTRTVSFSVYLKRSYTPSELEGNAVVSYSRPTDRNPDG</original>
    <variation>S</variation>
    <location>
        <begin position="478"/>
        <end position="518"/>
    </location>
</feature>
<feature type="splice variant" id="VSP_018427" description="In isoform 4." evidence="11">
    <original>TPDLTRTVSFSVYLKRSYTPSELEGNAVVSYSRPTD</original>
    <variation>N</variation>
    <location>
        <begin position="478"/>
        <end position="513"/>
    </location>
</feature>
<feature type="splice variant" id="VSP_018424" description="In isoform 6." evidence="12">
    <original>TPDL</original>
    <variation>IFSS</variation>
    <location>
        <begin position="478"/>
        <end position="481"/>
    </location>
</feature>
<feature type="splice variant" id="VSP_018425" description="In isoform 6." evidence="12">
    <location>
        <begin position="482"/>
        <end position="887"/>
    </location>
</feature>
<feature type="splice variant" id="VSP_054063" description="In isoform 7." evidence="12">
    <location>
        <begin position="513"/>
        <end position="517"/>
    </location>
</feature>
<feature type="splice variant" id="VSP_018428" description="In isoform 3." evidence="11">
    <original>EVSPLQGVSE</original>
    <variation>GKRLDGLHKR</variation>
    <location>
        <begin position="878"/>
        <end position="887"/>
    </location>
</feature>
<feature type="sequence variant" id="VAR_051289" description="In dbSNP:rs4498440.">
    <original>T</original>
    <variation>A</variation>
    <location>
        <position position="12"/>
    </location>
</feature>
<feature type="sequence variant" id="VAR_026389" description="In BBS9; severe loss of protein stability, probably due to aberrant folding; dbSNP:rs137852857." evidence="4 8">
    <original>G</original>
    <variation>R</variation>
    <location>
        <position position="141"/>
    </location>
</feature>
<feature type="sequence variant" id="VAR_051290" description="In dbSNP:rs11773504.">
    <original>A</original>
    <variation>T</variation>
    <location>
        <position position="455"/>
    </location>
</feature>
<feature type="sequence variant" id="VAR_026390" description="In dbSNP:rs764873070.">
    <original>A</original>
    <variation>V</variation>
    <location>
        <position position="455"/>
    </location>
</feature>
<feature type="sequence variant" id="VAR_051291" description="In dbSNP:rs34218557.">
    <original>R</original>
    <variation>Q</variation>
    <location>
        <position position="521"/>
    </location>
</feature>
<feature type="sequence variant" id="VAR_066292" description="In dbSNP:rs59252892." evidence="6">
    <original>T</original>
    <variation>I</variation>
    <location>
        <position position="549"/>
    </location>
</feature>
<feature type="sequence variant" id="VAR_066293" description="In dbSNP:rs116262072." evidence="6">
    <original>L</original>
    <variation>F</variation>
    <location>
        <position position="665"/>
    </location>
</feature>
<feature type="sequence variant" id="VAR_066294" description="In dbSNP:rs142434516." evidence="6">
    <original>L</original>
    <variation>Q</variation>
    <location>
        <position position="779"/>
    </location>
</feature>
<feature type="mutagenesis site" description="Fails to restore protein stability; when associated with pathogenic variant BBS9 R-141." evidence="8">
    <original>S</original>
    <variation>G</variation>
    <location>
        <position position="142"/>
    </location>
</feature>
<feature type="mutagenesis site" description="Fails to restore protein stability; when associated with pathogenic variant BBS9 R-141." evidence="8">
    <original>Y</original>
    <variation>A</variation>
    <location>
        <position position="186"/>
    </location>
</feature>
<feature type="sequence conflict" description="In Ref. 3; AAD25981." evidence="12" ref="3">
    <original>K</original>
    <variation>R</variation>
    <location>
        <position position="282"/>
    </location>
</feature>
<feature type="sequence conflict" description="In Ref. 4; AAB47568." evidence="12" ref="4">
    <original>L</original>
    <variation>V</variation>
    <location>
        <position position="759"/>
    </location>
</feature>
<feature type="strand" evidence="13">
    <location>
        <begin position="7"/>
        <end position="13"/>
    </location>
</feature>
<feature type="turn" evidence="13">
    <location>
        <begin position="15"/>
        <end position="17"/>
    </location>
</feature>
<feature type="strand" evidence="13">
    <location>
        <begin position="24"/>
        <end position="28"/>
    </location>
</feature>
<feature type="strand" evidence="13">
    <location>
        <begin position="39"/>
        <end position="43"/>
    </location>
</feature>
<feature type="strand" evidence="13">
    <location>
        <begin position="47"/>
        <end position="52"/>
    </location>
</feature>
<feature type="strand" evidence="13">
    <location>
        <begin position="57"/>
        <end position="62"/>
    </location>
</feature>
<feature type="strand" evidence="13">
    <location>
        <begin position="67"/>
        <end position="73"/>
    </location>
</feature>
<feature type="strand" evidence="13">
    <location>
        <begin position="80"/>
        <end position="84"/>
    </location>
</feature>
<feature type="strand" evidence="13">
    <location>
        <begin position="94"/>
        <end position="98"/>
    </location>
</feature>
<feature type="strand" evidence="13">
    <location>
        <begin position="100"/>
        <end position="108"/>
    </location>
</feature>
<feature type="strand" evidence="13">
    <location>
        <begin position="123"/>
        <end position="130"/>
    </location>
</feature>
<feature type="strand" evidence="13">
    <location>
        <begin position="135"/>
        <end position="141"/>
    </location>
</feature>
<feature type="helix" evidence="13">
    <location>
        <begin position="143"/>
        <end position="145"/>
    </location>
</feature>
<feature type="strand" evidence="13">
    <location>
        <begin position="151"/>
        <end position="156"/>
    </location>
</feature>
<feature type="strand" evidence="13">
    <location>
        <begin position="159"/>
        <end position="165"/>
    </location>
</feature>
<feature type="strand" evidence="13">
    <location>
        <begin position="168"/>
        <end position="174"/>
    </location>
</feature>
<feature type="strand" evidence="13">
    <location>
        <begin position="184"/>
        <end position="187"/>
    </location>
</feature>
<feature type="turn" evidence="13">
    <location>
        <begin position="188"/>
        <end position="191"/>
    </location>
</feature>
<feature type="strand" evidence="13">
    <location>
        <begin position="192"/>
        <end position="196"/>
    </location>
</feature>
<feature type="strand" evidence="13">
    <location>
        <begin position="200"/>
        <end position="206"/>
    </location>
</feature>
<feature type="helix" evidence="13">
    <location>
        <begin position="207"/>
        <end position="212"/>
    </location>
</feature>
<feature type="strand" evidence="13">
    <location>
        <begin position="236"/>
        <end position="240"/>
    </location>
</feature>
<feature type="strand" evidence="13">
    <location>
        <begin position="245"/>
        <end position="251"/>
    </location>
</feature>
<feature type="strand" evidence="13">
    <location>
        <begin position="259"/>
        <end position="271"/>
    </location>
</feature>
<feature type="strand" evidence="13">
    <location>
        <begin position="277"/>
        <end position="282"/>
    </location>
</feature>
<feature type="strand" evidence="13">
    <location>
        <begin position="287"/>
        <end position="294"/>
    </location>
</feature>
<feature type="strand" evidence="13">
    <location>
        <begin position="302"/>
        <end position="307"/>
    </location>
</feature>
<feature type="strand" evidence="13">
    <location>
        <begin position="310"/>
        <end position="316"/>
    </location>
</feature>
<feature type="strand" evidence="13">
    <location>
        <begin position="319"/>
        <end position="325"/>
    </location>
</feature>
<feature type="strand" evidence="13">
    <location>
        <begin position="330"/>
        <end position="338"/>
    </location>
</feature>
<feature type="strand" evidence="13">
    <location>
        <begin position="341"/>
        <end position="349"/>
    </location>
</feature>
<feature type="strand" evidence="13">
    <location>
        <begin position="353"/>
        <end position="358"/>
    </location>
</feature>
<feature type="turn" evidence="13">
    <location>
        <begin position="363"/>
        <end position="365"/>
    </location>
</feature>
<reference key="1">
    <citation type="journal article" date="2003" name="Nature">
        <title>The DNA sequence of human chromosome 7.</title>
        <authorList>
            <person name="Hillier L.W."/>
            <person name="Fulton R.S."/>
            <person name="Fulton L.A."/>
            <person name="Graves T.A."/>
            <person name="Pepin K.H."/>
            <person name="Wagner-McPherson C."/>
            <person name="Layman D."/>
            <person name="Maas J."/>
            <person name="Jaeger S."/>
            <person name="Walker R."/>
            <person name="Wylie K."/>
            <person name="Sekhon M."/>
            <person name="Becker M.C."/>
            <person name="O'Laughlin M.D."/>
            <person name="Schaller M.E."/>
            <person name="Fewell G.A."/>
            <person name="Delehaunty K.D."/>
            <person name="Miner T.L."/>
            <person name="Nash W.E."/>
            <person name="Cordes M."/>
            <person name="Du H."/>
            <person name="Sun H."/>
            <person name="Edwards J."/>
            <person name="Bradshaw-Cordum H."/>
            <person name="Ali J."/>
            <person name="Andrews S."/>
            <person name="Isak A."/>
            <person name="Vanbrunt A."/>
            <person name="Nguyen C."/>
            <person name="Du F."/>
            <person name="Lamar B."/>
            <person name="Courtney L."/>
            <person name="Kalicki J."/>
            <person name="Ozersky P."/>
            <person name="Bielicki L."/>
            <person name="Scott K."/>
            <person name="Holmes A."/>
            <person name="Harkins R."/>
            <person name="Harris A."/>
            <person name="Strong C.M."/>
            <person name="Hou S."/>
            <person name="Tomlinson C."/>
            <person name="Dauphin-Kohlberg S."/>
            <person name="Kozlowicz-Reilly A."/>
            <person name="Leonard S."/>
            <person name="Rohlfing T."/>
            <person name="Rock S.M."/>
            <person name="Tin-Wollam A.-M."/>
            <person name="Abbott A."/>
            <person name="Minx P."/>
            <person name="Maupin R."/>
            <person name="Strowmatt C."/>
            <person name="Latreille P."/>
            <person name="Miller N."/>
            <person name="Johnson D."/>
            <person name="Murray J."/>
            <person name="Woessner J.P."/>
            <person name="Wendl M.C."/>
            <person name="Yang S.-P."/>
            <person name="Schultz B.R."/>
            <person name="Wallis J.W."/>
            <person name="Spieth J."/>
            <person name="Bieri T.A."/>
            <person name="Nelson J.O."/>
            <person name="Berkowicz N."/>
            <person name="Wohldmann P.E."/>
            <person name="Cook L.L."/>
            <person name="Hickenbotham M.T."/>
            <person name="Eldred J."/>
            <person name="Williams D."/>
            <person name="Bedell J.A."/>
            <person name="Mardis E.R."/>
            <person name="Clifton S.W."/>
            <person name="Chissoe S.L."/>
            <person name="Marra M.A."/>
            <person name="Raymond C."/>
            <person name="Haugen E."/>
            <person name="Gillett W."/>
            <person name="Zhou Y."/>
            <person name="James R."/>
            <person name="Phelps K."/>
            <person name="Iadanoto S."/>
            <person name="Bubb K."/>
            <person name="Simms E."/>
            <person name="Levy R."/>
            <person name="Clendenning J."/>
            <person name="Kaul R."/>
            <person name="Kent W.J."/>
            <person name="Furey T.S."/>
            <person name="Baertsch R.A."/>
            <person name="Brent M.R."/>
            <person name="Keibler E."/>
            <person name="Flicek P."/>
            <person name="Bork P."/>
            <person name="Suyama M."/>
            <person name="Bailey J.A."/>
            <person name="Portnoy M.E."/>
            <person name="Torrents D."/>
            <person name="Chinwalla A.T."/>
            <person name="Gish W.R."/>
            <person name="Eddy S.R."/>
            <person name="McPherson J.D."/>
            <person name="Olson M.V."/>
            <person name="Eichler E.E."/>
            <person name="Green E.D."/>
            <person name="Waterston R.H."/>
            <person name="Wilson R.K."/>
        </authorList>
    </citation>
    <scope>NUCLEOTIDE SEQUENCE [LARGE SCALE GENOMIC DNA]</scope>
</reference>
<reference key="2">
    <citation type="journal article" date="2004" name="Genome Res.">
        <title>The status, quality, and expansion of the NIH full-length cDNA project: the Mammalian Gene Collection (MGC).</title>
        <authorList>
            <consortium name="The MGC Project Team"/>
        </authorList>
    </citation>
    <scope>NUCLEOTIDE SEQUENCE [LARGE SCALE MRNA] (ISOFORMS 1 AND 5)</scope>
    <source>
        <tissue>Uterus</tissue>
    </source>
</reference>
<reference key="3">
    <citation type="journal article" date="1999" name="Bone">
        <title>Identification of a novel parathyroid hormone-responsive gene in human osteoblastic cells.</title>
        <authorList>
            <person name="Adams A.E."/>
            <person name="Rosenblatt M."/>
            <person name="Suva L.J."/>
        </authorList>
    </citation>
    <scope>NUCLEOTIDE SEQUENCE [MRNA] OF 20-887 (ISOFORM 2)</scope>
    <scope>INDUCTION</scope>
    <scope>TISSUE SPECIFICITY</scope>
    <source>
        <tissue>Osteosarcoma</tissue>
    </source>
</reference>
<reference key="4">
    <citation type="submission" date="1997-01" db="EMBL/GenBank/DDBJ databases">
        <title>Positional candidates for the RP9 retinitis pigmentosa gene.</title>
        <authorList>
            <person name="Keen T.J."/>
        </authorList>
    </citation>
    <scope>NUCLEOTIDE SEQUENCE [MRNA] OF 424-887 (ISOFORM 4)</scope>
    <scope>NUCLEOTIDE SEQUENCE [MRNA] OF 611-887 (ISOFORM 1)</scope>
    <scope>NUCLEOTIDE SEQUENCE [MRNA] OF 435-887 (ISOFORM 3)</scope>
    <scope>NUCLEOTIDE SEQUENCE [GENOMIC DNA] OF 842-887</scope>
    <source>
        <tissue>Brain</tissue>
        <tissue>Spleen</tissue>
    </source>
</reference>
<reference key="5">
    <citation type="journal article" date="2003" name="Oncogene">
        <title>The parathyroid hormone-responsive B1 gene is interrupted by a t(1;7)(q42;p15) breakpoint associated with Wilms' tumour.</title>
        <authorList>
            <person name="Vernon E.G."/>
            <person name="Malik K."/>
            <person name="Reynolds P."/>
            <person name="Powlesland R."/>
            <person name="Dallosso A.R."/>
            <person name="Jackson S."/>
            <person name="Henthorn K."/>
            <person name="Green E.D."/>
            <person name="Brown K.W."/>
        </authorList>
    </citation>
    <scope>ALTERNATIVE SPLICING (ISOFORMS 1; 2; 4 AND 6)</scope>
    <scope>CHROMOSOMAL TRANSLOCATION WITH OBSCN</scope>
</reference>
<reference key="6">
    <citation type="journal article" date="2007" name="Cell">
        <title>A core complex of BBS proteins cooperates with the GTPase Rab8 to promote ciliary membrane biogenesis.</title>
        <authorList>
            <person name="Nachury M.V."/>
            <person name="Loktev A.V."/>
            <person name="Zhang Q."/>
            <person name="Westlake C.J."/>
            <person name="Peraenen J."/>
            <person name="Merdes A."/>
            <person name="Slusarski D.C."/>
            <person name="Scheller R.H."/>
            <person name="Bazan J.F."/>
            <person name="Sheffield V.C."/>
            <person name="Jackson P.K."/>
        </authorList>
    </citation>
    <scope>IDENTIFICATION BY MASS SPECTROMETRY</scope>
    <scope>SUBUNIT</scope>
    <scope>FUNCTION</scope>
    <scope>SUBCELLULAR LOCATION</scope>
</reference>
<reference key="7">
    <citation type="journal article" date="2011" name="PLoS Genet.">
        <title>A novel protein LZTFL1 regulates ciliary trafficking of the BBSome and Smoothened.</title>
        <authorList>
            <person name="Seo S."/>
            <person name="Zhang Q."/>
            <person name="Bugge K."/>
            <person name="Breslow D.K."/>
            <person name="Searby C.C."/>
            <person name="Nachury M.V."/>
            <person name="Sheffield V.C."/>
        </authorList>
    </citation>
    <scope>FUNCTION</scope>
    <scope>FUNCTION OF THE BBSOME COMPLEX</scope>
    <scope>INTERACTION WITH LZTL1</scope>
    <scope>IDENTIFICATION IN THE BBSOME COMPLEX</scope>
    <scope>SUBCELLULAR LOCATION</scope>
</reference>
<reference key="8">
    <citation type="journal article" date="2015" name="J. Biol. Chem.">
        <title>Structural characterization of Bardet-Biedl syndrome 9 protein (BBS9).</title>
        <authorList>
            <person name="Knockenhauer K.E."/>
            <person name="Schwartz T.U."/>
        </authorList>
    </citation>
    <scope>X-RAY CRYSTALLOGRAPHY (1.80 ANGSTROMS) OF 1-407</scope>
    <scope>CHARACTERIZATION OF VARIANT BBS9 ARG-141</scope>
    <scope>MUTAGENESIS OF SER-142 AND TYR-186</scope>
</reference>
<reference key="9">
    <citation type="journal article" date="2005" name="Am. J. Hum. Genet.">
        <title>Comparative genomics and gene expression analysis identifies BBS9, a new Bardet-Biedl syndrome gene.</title>
        <authorList>
            <person name="Nishimura D.Y."/>
            <person name="Swiderski R.E."/>
            <person name="Searby C.C."/>
            <person name="Berg E.M."/>
            <person name="Ferguson A.L."/>
            <person name="Hennekam R.C.M."/>
            <person name="Merin S."/>
            <person name="Weleber R.G."/>
            <person name="Biesecker L.G."/>
            <person name="Stone E.M."/>
            <person name="Sheffield V.C."/>
        </authorList>
    </citation>
    <scope>VARIANT BBS9 ARG-141</scope>
    <scope>TISSUE SPECIFICITY</scope>
</reference>
<reference key="10">
    <citation type="journal article" date="2011" name="Hum. Mutat.">
        <title>BBS genotype-phenotype assessment of a multiethnic patient cohort calls for a revision of the disease definition.</title>
        <authorList>
            <person name="Deveault C."/>
            <person name="Billingsley G."/>
            <person name="Duncan J.L."/>
            <person name="Bin J."/>
            <person name="Theal R."/>
            <person name="Vincent A."/>
            <person name="Fieggen K.J."/>
            <person name="Gerth C."/>
            <person name="Noordeh N."/>
            <person name="Traboulsi E.I."/>
            <person name="Fishman G.A."/>
            <person name="Chitayat D."/>
            <person name="Knueppel T."/>
            <person name="Millan J.M."/>
            <person name="Munier F.L."/>
            <person name="Kennedy D."/>
            <person name="Jacobson S.G."/>
            <person name="Innes A.M."/>
            <person name="Mitchell G.A."/>
            <person name="Boycott K."/>
            <person name="Heon E."/>
        </authorList>
    </citation>
    <scope>VARIANTS ILE-549; PHE-665 AND GLN-779</scope>
</reference>
<comment type="function">
    <text evidence="5 7">The BBSome complex is thought to function as a coat complex required for sorting of specific membrane proteins to the primary cilia. The BBSome complex is required for ciliogenesis but is dispensable for centriolar satellite function. This ciliogenic function is mediated in part by the Rab8 GDP/GTP exchange factor, which localizes to the basal body and contacts the BBSome. Rab8(GTP) enters the primary cilium and promotes extension of the ciliary membrane. Firstly the BBSome associates with the ciliary membrane and binds to RAB3IP/Rabin8, the guanosyl exchange factor (GEF) for Rab8 and then the Rab8-GTP localizes to the cilium and promotes docking and fusion of carrier vesicles to the base of the ciliary membrane. Required for proper BBSome complex assembly and its ciliary localization.</text>
</comment>
<comment type="subunit">
    <text evidence="5 7">Part of BBSome complex, that contains BBS1, BBS2, BBS4, BBS5, BBS7, BBS8/TTC8, BBS9 and BBIP10. Interacts with LZTL1; the interaction mediates the association of LZTL1 with the BBsome complex and regulates BBSome ciliary trafficking.</text>
</comment>
<comment type="interaction">
    <interactant intactId="EBI-2826852">
        <id>Q3SYG4</id>
    </interactant>
    <interactant intactId="EBI-1805484">
        <id>Q8NFJ9</id>
        <label>BBS1</label>
    </interactant>
    <organismsDiffer>false</organismsDiffer>
    <experiments>14</experiments>
</comment>
<comment type="interaction">
    <interactant intactId="EBI-2826852">
        <id>Q3SYG4</id>
    </interactant>
    <interactant intactId="EBI-6128013">
        <id>Q8TAM1</id>
        <label>BBS10</label>
    </interactant>
    <organismsDiffer>false</organismsDiffer>
    <experiments>2</experiments>
</comment>
<comment type="interaction">
    <interactant intactId="EBI-2826852">
        <id>Q3SYG4</id>
    </interactant>
    <interactant intactId="EBI-6128352">
        <id>Q6ZW61</id>
        <label>BBS12</label>
    </interactant>
    <organismsDiffer>false</organismsDiffer>
    <experiments>2</experiments>
</comment>
<comment type="interaction">
    <interactant intactId="EBI-2826852">
        <id>Q3SYG4</id>
    </interactant>
    <interactant intactId="EBI-748297">
        <id>Q9BXC9</id>
        <label>BBS2</label>
    </interactant>
    <organismsDiffer>false</organismsDiffer>
    <experiments>14</experiments>
</comment>
<comment type="interaction">
    <interactant intactId="EBI-2826852">
        <id>Q3SYG4</id>
    </interactant>
    <interactant intactId="EBI-1805814">
        <id>Q96RK4</id>
        <label>BBS4</label>
    </interactant>
    <organismsDiffer>false</organismsDiffer>
    <experiments>6</experiments>
</comment>
<comment type="interaction">
    <interactant intactId="EBI-2826852">
        <id>Q3SYG4</id>
    </interactant>
    <interactant intactId="EBI-2892592">
        <id>Q8N3I7</id>
        <label>BBS5</label>
    </interactant>
    <organismsDiffer>false</organismsDiffer>
    <experiments>9</experiments>
</comment>
<comment type="interaction">
    <interactant intactId="EBI-2826852">
        <id>Q3SYG4</id>
    </interactant>
    <interactant intactId="EBI-2805823">
        <id>Q15051</id>
        <label>IQCB1</label>
    </interactant>
    <organismsDiffer>false</organismsDiffer>
    <experiments>5</experiments>
</comment>
<comment type="interaction">
    <interactant intactId="EBI-2826852">
        <id>Q3SYG4</id>
    </interactant>
    <interactant intactId="EBI-2824799">
        <id>Q9NQ48</id>
        <label>LZTFL1</label>
    </interactant>
    <organismsDiffer>false</organismsDiffer>
    <experiments>10</experiments>
</comment>
<comment type="interaction">
    <interactant intactId="EBI-2826852">
        <id>Q3SYG4</id>
    </interactant>
    <interactant intactId="EBI-20959097">
        <id>A0A0C4DGX9</id>
        <label>TTC8</label>
    </interactant>
    <organismsDiffer>false</organismsDiffer>
    <experiments>3</experiments>
</comment>
<comment type="interaction">
    <interactant intactId="EBI-2826852">
        <id>Q3SYG4</id>
    </interactant>
    <interactant intactId="EBI-2892638">
        <id>Q8TAM2</id>
        <label>TTC8</label>
    </interactant>
    <organismsDiffer>false</organismsDiffer>
    <experiments>2</experiments>
</comment>
<comment type="subcellular location">
    <subcellularLocation>
        <location>Cytoplasm</location>
        <location>Cytoskeleton</location>
        <location>Microtubule organizing center</location>
        <location>Centrosome</location>
    </subcellularLocation>
    <subcellularLocation>
        <location>Cell projection</location>
        <location>Cilium membrane</location>
    </subcellularLocation>
    <subcellularLocation>
        <location>Cytoplasm</location>
    </subcellularLocation>
    <subcellularLocation>
        <location>Cytoplasm</location>
        <location>Cytoskeleton</location>
        <location>Microtubule organizing center</location>
        <location>Centrosome</location>
        <location>Centriolar satellite</location>
    </subcellularLocation>
</comment>
<comment type="alternative products">
    <event type="alternative splicing"/>
    <isoform>
        <id>Q3SYG4-1</id>
        <name>1</name>
        <sequence type="displayed"/>
    </isoform>
    <isoform>
        <id>Q3SYG4-2</id>
        <name>2</name>
        <sequence type="described" ref="VSP_018426"/>
    </isoform>
    <isoform>
        <id>Q3SYG4-3</id>
        <name>3</name>
        <sequence type="described" ref="VSP_018428"/>
    </isoform>
    <isoform>
        <id>Q3SYG4-4</id>
        <name>4</name>
        <sequence type="described" ref="VSP_018427"/>
    </isoform>
    <isoform>
        <id>Q3SYG4-5</id>
        <name>5</name>
        <sequence type="described" ref="VSP_018421 VSP_018422 VSP_018423"/>
    </isoform>
    <isoform>
        <id>Q3SYG4-6</id>
        <name>6</name>
        <sequence type="described" ref="VSP_018424 VSP_018425"/>
    </isoform>
    <isoform>
        <id>Q3SYG4-7</id>
        <name>7</name>
        <sequence type="described" ref="VSP_054063"/>
    </isoform>
</comment>
<comment type="tissue specificity">
    <text evidence="2 4">Widely expressed. Expressed in adult heart, skeletal muscle, lung, liver, kidney, placenta and brain, and in fetal kidney, lung, liver and brain.</text>
</comment>
<comment type="induction">
    <text evidence="2">Down-regulated by parathyroid hormone.</text>
</comment>
<comment type="disease">
    <text evidence="3">A chromosomal aberration involving PTHB1 has been found in Wilms tumor. Translocation t(1;7)(q42;p15) with OBSCN.</text>
</comment>
<comment type="disease" evidence="4 8">
    <disease id="DI-00167">
        <name>Bardet-Biedl syndrome 9</name>
        <acronym>BBS9</acronym>
        <description>A syndrome characterized by usually severe pigmentary retinopathy, early-onset obesity, polydactyly, hypogenitalism, renal malformation and intellectual disability. Secondary features include diabetes mellitus, hypertension and congenital heart disease. Bardet-Biedl syndrome inheritance is autosomal recessive, but three mutated alleles (two at one locus, and a third at a second locus) may be required for clinical manifestation of some forms of the disease.</description>
        <dbReference type="MIM" id="615986"/>
    </disease>
    <text>The disease is caused by variants affecting the gene represented in this entry.</text>
</comment>
<comment type="sequence caution" evidence="12">
    <conflict type="miscellaneous discrepancy">
        <sequence resource="EMBL-CDS" id="AAD25980"/>
    </conflict>
    <text>Chimera.</text>
</comment>
<comment type="sequence caution" evidence="12">
    <conflict type="erroneous initiation">
        <sequence resource="EMBL-CDS" id="AAD25981"/>
    </conflict>
    <text>Truncated N-terminus.</text>
</comment>
<protein>
    <recommendedName>
        <fullName>Protein PTHB1</fullName>
    </recommendedName>
    <alternativeName>
        <fullName>Bardet-Biedl syndrome 9 protein</fullName>
    </alternativeName>
    <alternativeName>
        <fullName>Parathyroid hormone-responsive B1 gene protein</fullName>
    </alternativeName>
</protein>
<dbReference type="EMBL" id="AC006195">
    <property type="status" value="NOT_ANNOTATED_CDS"/>
    <property type="molecule type" value="Genomic_DNA"/>
</dbReference>
<dbReference type="EMBL" id="AC007312">
    <property type="status" value="NOT_ANNOTATED_CDS"/>
    <property type="molecule type" value="Genomic_DNA"/>
</dbReference>
<dbReference type="EMBL" id="AC074338">
    <property type="status" value="NOT_ANNOTATED_CDS"/>
    <property type="molecule type" value="Genomic_DNA"/>
</dbReference>
<dbReference type="EMBL" id="AC078833">
    <property type="status" value="NOT_ANNOTATED_CDS"/>
    <property type="molecule type" value="Genomic_DNA"/>
</dbReference>
<dbReference type="EMBL" id="AC087070">
    <property type="status" value="NOT_ANNOTATED_CDS"/>
    <property type="molecule type" value="Genomic_DNA"/>
</dbReference>
<dbReference type="EMBL" id="BC032715">
    <property type="protein sequence ID" value="AAH32715.1"/>
    <property type="molecule type" value="mRNA"/>
</dbReference>
<dbReference type="EMBL" id="BC103831">
    <property type="protein sequence ID" value="AAI03832.1"/>
    <property type="molecule type" value="mRNA"/>
</dbReference>
<dbReference type="EMBL" id="AF095770">
    <property type="protein sequence ID" value="AAD25980.1"/>
    <property type="status" value="ALT_SEQ"/>
    <property type="molecule type" value="mRNA"/>
</dbReference>
<dbReference type="EMBL" id="AF095771">
    <property type="protein sequence ID" value="AAD25981.1"/>
    <property type="status" value="ALT_INIT"/>
    <property type="molecule type" value="mRNA"/>
</dbReference>
<dbReference type="EMBL" id="U85994">
    <property type="protein sequence ID" value="AAB61918.1"/>
    <property type="molecule type" value="mRNA"/>
</dbReference>
<dbReference type="EMBL" id="U85995">
    <property type="protein sequence ID" value="AAB61919.1"/>
    <property type="molecule type" value="mRNA"/>
</dbReference>
<dbReference type="EMBL" id="U85997">
    <property type="protein sequence ID" value="AAB46606.1"/>
    <property type="molecule type" value="Genomic_DNA"/>
</dbReference>
<dbReference type="EMBL" id="U87408">
    <property type="protein sequence ID" value="AAB47568.1"/>
    <property type="molecule type" value="mRNA"/>
</dbReference>
<dbReference type="CCDS" id="CCDS34618.1">
    <molecule id="Q3SYG4-7"/>
</dbReference>
<dbReference type="CCDS" id="CCDS43566.1">
    <molecule id="Q3SYG4-1"/>
</dbReference>
<dbReference type="CCDS" id="CCDS47572.1">
    <molecule id="Q3SYG4-4"/>
</dbReference>
<dbReference type="CCDS" id="CCDS5441.1">
    <molecule id="Q3SYG4-2"/>
</dbReference>
<dbReference type="RefSeq" id="NP_001028776.1">
    <molecule id="Q3SYG4-4"/>
    <property type="nucleotide sequence ID" value="NM_001033604.2"/>
</dbReference>
<dbReference type="RefSeq" id="NP_001028777.1">
    <molecule id="Q3SYG4-7"/>
    <property type="nucleotide sequence ID" value="NM_001033605.2"/>
</dbReference>
<dbReference type="RefSeq" id="NP_001334965.1">
    <molecule id="Q3SYG4-1"/>
    <property type="nucleotide sequence ID" value="NM_001348036.1"/>
</dbReference>
<dbReference type="RefSeq" id="NP_055266.2">
    <molecule id="Q3SYG4-2"/>
    <property type="nucleotide sequence ID" value="NM_014451.3"/>
</dbReference>
<dbReference type="RefSeq" id="NP_940820.1">
    <molecule id="Q3SYG4-1"/>
    <property type="nucleotide sequence ID" value="NM_198428.3"/>
</dbReference>
<dbReference type="PDB" id="4YD8">
    <property type="method" value="X-ray"/>
    <property type="resolution" value="1.80 A"/>
    <property type="chains" value="A/B=1-407"/>
</dbReference>
<dbReference type="PDB" id="6XT9">
    <property type="method" value="EM"/>
    <property type="resolution" value="3.80 A"/>
    <property type="chains" value="I=1-887"/>
</dbReference>
<dbReference type="PDBsum" id="4YD8"/>
<dbReference type="PDBsum" id="6XT9"/>
<dbReference type="EMDB" id="EMD-10617"/>
<dbReference type="SMR" id="Q3SYG4"/>
<dbReference type="BioGRID" id="118089">
    <property type="interactions" value="22"/>
</dbReference>
<dbReference type="ComplexPortal" id="CPX-1908">
    <property type="entry name" value="BBSome complex"/>
</dbReference>
<dbReference type="CORUM" id="Q3SYG4"/>
<dbReference type="DIP" id="DIP-60358N"/>
<dbReference type="FunCoup" id="Q3SYG4">
    <property type="interactions" value="686"/>
</dbReference>
<dbReference type="IntAct" id="Q3SYG4">
    <property type="interactions" value="27"/>
</dbReference>
<dbReference type="MINT" id="Q3SYG4"/>
<dbReference type="STRING" id="9606.ENSP00000242067"/>
<dbReference type="TCDB" id="3.A.33.1.1">
    <property type="family name" value="the bbsome complex (bbsome) family"/>
</dbReference>
<dbReference type="GlyGen" id="Q3SYG4">
    <property type="glycosylation" value="4 sites, 1 O-linked glycan (2 sites)"/>
</dbReference>
<dbReference type="iPTMnet" id="Q3SYG4"/>
<dbReference type="PhosphoSitePlus" id="Q3SYG4"/>
<dbReference type="BioMuta" id="BBS9"/>
<dbReference type="DMDM" id="97180305"/>
<dbReference type="jPOST" id="Q3SYG4"/>
<dbReference type="MassIVE" id="Q3SYG4"/>
<dbReference type="PaxDb" id="9606-ENSP00000242067"/>
<dbReference type="PeptideAtlas" id="Q3SYG4"/>
<dbReference type="ProteomicsDB" id="19635"/>
<dbReference type="ProteomicsDB" id="61861">
    <molecule id="Q3SYG4-1"/>
</dbReference>
<dbReference type="ProteomicsDB" id="61862">
    <molecule id="Q3SYG4-2"/>
</dbReference>
<dbReference type="ProteomicsDB" id="61863">
    <molecule id="Q3SYG4-3"/>
</dbReference>
<dbReference type="ProteomicsDB" id="61864">
    <molecule id="Q3SYG4-4"/>
</dbReference>
<dbReference type="ProteomicsDB" id="61865">
    <molecule id="Q3SYG4-5"/>
</dbReference>
<dbReference type="ProteomicsDB" id="61866">
    <molecule id="Q3SYG4-6"/>
</dbReference>
<dbReference type="Antibodypedia" id="12805">
    <property type="antibodies" value="161 antibodies from 24 providers"/>
</dbReference>
<dbReference type="DNASU" id="27241"/>
<dbReference type="Ensembl" id="ENST00000242067.11">
    <molecule id="Q3SYG4-1"/>
    <property type="protein sequence ID" value="ENSP00000242067.6"/>
    <property type="gene ID" value="ENSG00000122507.21"/>
</dbReference>
<dbReference type="Ensembl" id="ENST00000350941.7">
    <molecule id="Q3SYG4-2"/>
    <property type="protein sequence ID" value="ENSP00000313122.6"/>
    <property type="gene ID" value="ENSG00000122507.21"/>
</dbReference>
<dbReference type="Ensembl" id="ENST00000355070.6">
    <molecule id="Q3SYG4-7"/>
    <property type="protein sequence ID" value="ENSP00000347182.2"/>
    <property type="gene ID" value="ENSG00000122507.21"/>
</dbReference>
<dbReference type="Ensembl" id="ENST00000396127.6">
    <molecule id="Q3SYG4-4"/>
    <property type="protein sequence ID" value="ENSP00000379433.2"/>
    <property type="gene ID" value="ENSG00000122507.21"/>
</dbReference>
<dbReference type="Ensembl" id="ENST00000425508.6">
    <molecule id="Q3SYG4-5"/>
    <property type="protein sequence ID" value="ENSP00000405151.2"/>
    <property type="gene ID" value="ENSG00000122507.21"/>
</dbReference>
<dbReference type="Ensembl" id="ENST00000672717.1">
    <molecule id="Q3SYG4-4"/>
    <property type="protein sequence ID" value="ENSP00000499835.1"/>
    <property type="gene ID" value="ENSG00000122507.21"/>
</dbReference>
<dbReference type="Ensembl" id="ENST00000673462.1">
    <molecule id="Q3SYG4-6"/>
    <property type="protein sequence ID" value="ENSP00000499848.1"/>
    <property type="gene ID" value="ENSG00000122507.21"/>
</dbReference>
<dbReference type="GeneID" id="27241"/>
<dbReference type="KEGG" id="hsa:27241"/>
<dbReference type="MANE-Select" id="ENST00000242067.11">
    <property type="protein sequence ID" value="ENSP00000242067.6"/>
    <property type="RefSeq nucleotide sequence ID" value="NM_198428.3"/>
    <property type="RefSeq protein sequence ID" value="NP_940820.1"/>
</dbReference>
<dbReference type="UCSC" id="uc003tdn.2">
    <molecule id="Q3SYG4-1"/>
    <property type="organism name" value="human"/>
</dbReference>
<dbReference type="AGR" id="HGNC:30000"/>
<dbReference type="CTD" id="27241"/>
<dbReference type="DisGeNET" id="27241"/>
<dbReference type="GeneCards" id="BBS9"/>
<dbReference type="GeneReviews" id="BBS9"/>
<dbReference type="HGNC" id="HGNC:30000">
    <property type="gene designation" value="BBS9"/>
</dbReference>
<dbReference type="HPA" id="ENSG00000122507">
    <property type="expression patterns" value="Low tissue specificity"/>
</dbReference>
<dbReference type="MalaCards" id="BBS9"/>
<dbReference type="MIM" id="607968">
    <property type="type" value="gene"/>
</dbReference>
<dbReference type="MIM" id="615986">
    <property type="type" value="phenotype"/>
</dbReference>
<dbReference type="neXtProt" id="NX_Q3SYG4"/>
<dbReference type="OpenTargets" id="ENSG00000122507"/>
<dbReference type="Orphanet" id="110">
    <property type="disease" value="Bardet-Biedl syndrome"/>
</dbReference>
<dbReference type="PharmGKB" id="PA162377359"/>
<dbReference type="VEuPathDB" id="HostDB:ENSG00000122507"/>
<dbReference type="eggNOG" id="KOG3679">
    <property type="taxonomic scope" value="Eukaryota"/>
</dbReference>
<dbReference type="GeneTree" id="ENSGT00390000000803"/>
<dbReference type="HOGENOM" id="CLU_015674_1_0_1"/>
<dbReference type="InParanoid" id="Q3SYG4"/>
<dbReference type="OMA" id="VPVEDWT"/>
<dbReference type="OrthoDB" id="10262646at2759"/>
<dbReference type="PAN-GO" id="Q3SYG4">
    <property type="GO annotations" value="3 GO annotations based on evolutionary models"/>
</dbReference>
<dbReference type="PhylomeDB" id="Q3SYG4"/>
<dbReference type="TreeFam" id="TF314513"/>
<dbReference type="PathwayCommons" id="Q3SYG4"/>
<dbReference type="Reactome" id="R-HSA-5620922">
    <property type="pathway name" value="BBSome-mediated cargo-targeting to cilium"/>
</dbReference>
<dbReference type="SignaLink" id="Q3SYG4"/>
<dbReference type="SIGNOR" id="Q3SYG4"/>
<dbReference type="BioGRID-ORCS" id="27241">
    <property type="hits" value="17 hits in 1152 CRISPR screens"/>
</dbReference>
<dbReference type="ChiTaRS" id="BBS9">
    <property type="organism name" value="human"/>
</dbReference>
<dbReference type="EvolutionaryTrace" id="Q3SYG4"/>
<dbReference type="GeneWiki" id="BBS9"/>
<dbReference type="GenomeRNAi" id="27241"/>
<dbReference type="Pharos" id="Q3SYG4">
    <property type="development level" value="Tbio"/>
</dbReference>
<dbReference type="PRO" id="PR:Q3SYG4"/>
<dbReference type="Proteomes" id="UP000005640">
    <property type="component" value="Chromosome 7"/>
</dbReference>
<dbReference type="RNAct" id="Q3SYG4">
    <property type="molecule type" value="protein"/>
</dbReference>
<dbReference type="Bgee" id="ENSG00000122507">
    <property type="expression patterns" value="Expressed in oocyte and 196 other cell types or tissues"/>
</dbReference>
<dbReference type="ExpressionAtlas" id="Q3SYG4">
    <property type="expression patterns" value="baseline and differential"/>
</dbReference>
<dbReference type="GO" id="GO:0034464">
    <property type="term" value="C:BBSome"/>
    <property type="evidence" value="ECO:0000314"/>
    <property type="project" value="UniProtKB"/>
</dbReference>
<dbReference type="GO" id="GO:0034451">
    <property type="term" value="C:centriolar satellite"/>
    <property type="evidence" value="ECO:0000314"/>
    <property type="project" value="GO_Central"/>
</dbReference>
<dbReference type="GO" id="GO:0036064">
    <property type="term" value="C:ciliary basal body"/>
    <property type="evidence" value="ECO:0000314"/>
    <property type="project" value="HPA"/>
</dbReference>
<dbReference type="GO" id="GO:0060170">
    <property type="term" value="C:ciliary membrane"/>
    <property type="evidence" value="ECO:0000314"/>
    <property type="project" value="ComplexPortal"/>
</dbReference>
<dbReference type="GO" id="GO:0035869">
    <property type="term" value="C:ciliary transition zone"/>
    <property type="evidence" value="ECO:0000314"/>
    <property type="project" value="GO_Central"/>
</dbReference>
<dbReference type="GO" id="GO:0005929">
    <property type="term" value="C:cilium"/>
    <property type="evidence" value="ECO:0000314"/>
    <property type="project" value="HPA"/>
</dbReference>
<dbReference type="GO" id="GO:0005829">
    <property type="term" value="C:cytosol"/>
    <property type="evidence" value="ECO:0000314"/>
    <property type="project" value="HPA"/>
</dbReference>
<dbReference type="GO" id="GO:0016020">
    <property type="term" value="C:membrane"/>
    <property type="evidence" value="ECO:0000318"/>
    <property type="project" value="GO_Central"/>
</dbReference>
<dbReference type="GO" id="GO:0005654">
    <property type="term" value="C:nucleoplasm"/>
    <property type="evidence" value="ECO:0000314"/>
    <property type="project" value="HPA"/>
</dbReference>
<dbReference type="GO" id="GO:0000242">
    <property type="term" value="C:pericentriolar material"/>
    <property type="evidence" value="ECO:0000314"/>
    <property type="project" value="MGI"/>
</dbReference>
<dbReference type="GO" id="GO:0060271">
    <property type="term" value="P:cilium assembly"/>
    <property type="evidence" value="ECO:0000318"/>
    <property type="project" value="GO_Central"/>
</dbReference>
<dbReference type="GO" id="GO:0045444">
    <property type="term" value="P:fat cell differentiation"/>
    <property type="evidence" value="ECO:0000250"/>
    <property type="project" value="BHF-UCL"/>
</dbReference>
<dbReference type="GO" id="GO:0061512">
    <property type="term" value="P:protein localization to cilium"/>
    <property type="evidence" value="ECO:0000315"/>
    <property type="project" value="GO_Central"/>
</dbReference>
<dbReference type="GO" id="GO:0015031">
    <property type="term" value="P:protein transport"/>
    <property type="evidence" value="ECO:0007669"/>
    <property type="project" value="UniProtKB-KW"/>
</dbReference>
<dbReference type="GO" id="GO:0007601">
    <property type="term" value="P:visual perception"/>
    <property type="evidence" value="ECO:0007669"/>
    <property type="project" value="UniProtKB-KW"/>
</dbReference>
<dbReference type="InterPro" id="IPR028074">
    <property type="entry name" value="PHTB1_GAE_dom"/>
</dbReference>
<dbReference type="InterPro" id="IPR028073">
    <property type="entry name" value="PHTB1_N_dom"/>
</dbReference>
<dbReference type="InterPro" id="IPR026511">
    <property type="entry name" value="PTHB1"/>
</dbReference>
<dbReference type="InterPro" id="IPR055364">
    <property type="entry name" value="PTHB1_CtH_dom"/>
</dbReference>
<dbReference type="InterPro" id="IPR055363">
    <property type="entry name" value="PTHB1_hp_dom"/>
</dbReference>
<dbReference type="InterPro" id="IPR055362">
    <property type="entry name" value="PTHB1_pf_dom"/>
</dbReference>
<dbReference type="PANTHER" id="PTHR20991">
    <property type="entry name" value="PARATHYROID HORMONE-RESPONSIVE B1 GENE"/>
    <property type="match status" value="1"/>
</dbReference>
<dbReference type="PANTHER" id="PTHR20991:SF0">
    <property type="entry name" value="PROTEIN PTHB1"/>
    <property type="match status" value="1"/>
</dbReference>
<dbReference type="Pfam" id="PF14727">
    <property type="entry name" value="PHTB1_N"/>
    <property type="match status" value="1"/>
</dbReference>
<dbReference type="Pfam" id="PF23339">
    <property type="entry name" value="PTHB1_CtH"/>
    <property type="match status" value="1"/>
</dbReference>
<dbReference type="Pfam" id="PF14728">
    <property type="entry name" value="PTHB1_GAE"/>
    <property type="match status" value="1"/>
</dbReference>
<dbReference type="Pfam" id="PF23338">
    <property type="entry name" value="PTHB1_hp"/>
    <property type="match status" value="1"/>
</dbReference>
<dbReference type="Pfam" id="PF23337">
    <property type="entry name" value="PTHB1_pf"/>
    <property type="match status" value="1"/>
</dbReference>
<keyword id="KW-0002">3D-structure</keyword>
<keyword id="KW-0025">Alternative splicing</keyword>
<keyword id="KW-0083">Bardet-Biedl syndrome</keyword>
<keyword id="KW-1003">Cell membrane</keyword>
<keyword id="KW-0966">Cell projection</keyword>
<keyword id="KW-0160">Chromosomal rearrangement</keyword>
<keyword id="KW-1186">Ciliopathy</keyword>
<keyword id="KW-0969">Cilium</keyword>
<keyword id="KW-0970">Cilium biogenesis/degradation</keyword>
<keyword id="KW-0963">Cytoplasm</keyword>
<keyword id="KW-0206">Cytoskeleton</keyword>
<keyword id="KW-0225">Disease variant</keyword>
<keyword id="KW-0991">Intellectual disability</keyword>
<keyword id="KW-0472">Membrane</keyword>
<keyword id="KW-0550">Obesity</keyword>
<keyword id="KW-0653">Protein transport</keyword>
<keyword id="KW-1267">Proteomics identification</keyword>
<keyword id="KW-1185">Reference proteome</keyword>
<keyword id="KW-0716">Sensory transduction</keyword>
<keyword id="KW-0813">Transport</keyword>
<keyword id="KW-0844">Vision</keyword>
<accession>Q3SYG4</accession>
<accession>E9PDC9</accession>
<accession>P78514</accession>
<accession>Q7KYS6</accession>
<accession>Q7KYS7</accession>
<accession>Q8N570</accession>
<accession>Q99844</accession>
<accession>Q99854</accession>
<accession>Q9Y699</accession>
<accession>Q9Y6A0</accession>
<organism>
    <name type="scientific">Homo sapiens</name>
    <name type="common">Human</name>
    <dbReference type="NCBI Taxonomy" id="9606"/>
    <lineage>
        <taxon>Eukaryota</taxon>
        <taxon>Metazoa</taxon>
        <taxon>Chordata</taxon>
        <taxon>Craniata</taxon>
        <taxon>Vertebrata</taxon>
        <taxon>Euteleostomi</taxon>
        <taxon>Mammalia</taxon>
        <taxon>Eutheria</taxon>
        <taxon>Euarchontoglires</taxon>
        <taxon>Primates</taxon>
        <taxon>Haplorrhini</taxon>
        <taxon>Catarrhini</taxon>
        <taxon>Hominidae</taxon>
        <taxon>Homo</taxon>
    </lineage>
</organism>
<name>PTHB1_HUMAN</name>
<proteinExistence type="evidence at protein level"/>
<sequence>MSLFKARDWWSTILGDKEEFDQGCLCLANVDNSGNGQDKIIVGSFMGYLRIFSPHPAKTGDGAQAEDLLLEVDLRDPVLQVEVGKFVSGTEMLHLAVLHSRKLCVYSVSGTLGNVEHGNQCQMKLMYEHNLQRTACNMTYGSFGGVKGRDLICIQSMDGMLMVFEQESYAFGRFLPGFLLPGPLAYSSRTDSFLTVSSCQQVESYKYQVLAFATDADKRQETEQQKLGSGKRLVVDWTLNIGEQALDICIVSFNQSASSVFVLGERNFFCLKDNGQIRFMKKLDWSPSCFLPYCSVSEGTINTLIGNHNNMLHIYQDVTLKWATQLPHIPVAVRVGCLHDLKGVIVTLSDDGHLQCSYLGTDPSLFQAPNVQSRELNYDELDVEMKELQKIIKDVNKSQGVWPMTEREDDLNVSVVVSPNFDSVSQATDVEVGTDLVPSVTVKVTLQNRVILQKAKLSVYVQPPLELTCDQFTFEFMTPDLTRTVSFSVYLKRSYTPSELEGNAVVSYSRPTDRNPDGIPRVIQCKFRLPLKLICLPGQPSKTASHKITIDTNKSPVSLLSLFPGFASQSDDDQVNVMGFHFLGGARITVLASKTSQRYRIQSEQFEDLWLITNELILRLQEYFEKQGVKDFACSFSGSIPLQEYFELIDHHFELRINGEKLEELLSERAVQFRAIQRRLLARFKDKTPAPLQHLDTLLDGTYKQVIALADAVEENQGNLFQSFTRLKSATHLVILLIALWQKLSADQVAILEAAFLPLQEDTQELGWEETVDAAISHLLKTCLSKSSKEQALNLNSQLNIPKDTSQLKKHITLLCDRLSKGGRLCLSTDAAAPQTMVMPGGCTTIPESDLEERSVEQDSTELFTNHRHLTAETPRPEVSPLQGVSE</sequence>
<gene>
    <name type="primary">BBS9</name>
    <name type="synonym">PTHB1</name>
</gene>